<feature type="chain" id="PRO_0000061748" description="Cytochrome b">
    <location>
        <begin position="1"/>
        <end position="389"/>
    </location>
</feature>
<feature type="transmembrane region" description="Helical" evidence="3">
    <location>
        <begin position="32"/>
        <end position="52"/>
    </location>
</feature>
<feature type="transmembrane region" description="Helical" evidence="3">
    <location>
        <begin position="76"/>
        <end position="98"/>
    </location>
</feature>
<feature type="transmembrane region" description="Helical" evidence="3">
    <location>
        <begin position="113"/>
        <end position="133"/>
    </location>
</feature>
<feature type="transmembrane region" description="Helical" evidence="3">
    <location>
        <begin position="179"/>
        <end position="199"/>
    </location>
</feature>
<feature type="transmembrane region" description="Helical" evidence="3">
    <location>
        <begin position="225"/>
        <end position="245"/>
    </location>
</feature>
<feature type="transmembrane region" description="Helical" evidence="3">
    <location>
        <begin position="289"/>
        <end position="309"/>
    </location>
</feature>
<feature type="transmembrane region" description="Helical" evidence="3">
    <location>
        <begin position="322"/>
        <end position="342"/>
    </location>
</feature>
<feature type="transmembrane region" description="Helical" evidence="3">
    <location>
        <begin position="349"/>
        <end position="369"/>
    </location>
</feature>
<feature type="binding site" description="axial binding residue" evidence="5">
    <location>
        <position position="82"/>
    </location>
    <ligand>
        <name>heme b</name>
        <dbReference type="ChEBI" id="CHEBI:60344"/>
        <label>b562</label>
    </ligand>
    <ligandPart>
        <name>Fe</name>
        <dbReference type="ChEBI" id="CHEBI:18248"/>
    </ligandPart>
</feature>
<feature type="binding site" description="axial binding residue" evidence="5">
    <location>
        <position position="96"/>
    </location>
    <ligand>
        <name>heme b</name>
        <dbReference type="ChEBI" id="CHEBI:60344"/>
        <label>b566</label>
    </ligand>
    <ligandPart>
        <name>Fe</name>
        <dbReference type="ChEBI" id="CHEBI:18248"/>
    </ligandPart>
</feature>
<feature type="binding site" description="axial binding residue" evidence="5">
    <location>
        <position position="183"/>
    </location>
    <ligand>
        <name>heme b</name>
        <dbReference type="ChEBI" id="CHEBI:60344"/>
        <label>b562</label>
    </ligand>
    <ligandPart>
        <name>Fe</name>
        <dbReference type="ChEBI" id="CHEBI:18248"/>
    </ligandPart>
</feature>
<feature type="binding site" description="axial binding residue" evidence="5">
    <location>
        <position position="197"/>
    </location>
    <ligand>
        <name>heme b</name>
        <dbReference type="ChEBI" id="CHEBI:60344"/>
        <label>b566</label>
    </ligand>
    <ligandPart>
        <name>Fe</name>
        <dbReference type="ChEBI" id="CHEBI:18248"/>
    </ligandPart>
</feature>
<feature type="binding site" evidence="2">
    <location>
        <position position="202"/>
    </location>
    <ligand>
        <name>a ubiquinone</name>
        <dbReference type="ChEBI" id="CHEBI:16389"/>
    </ligand>
</feature>
<organism>
    <name type="scientific">Mycena viridimarginata</name>
    <dbReference type="NCBI Taxonomy" id="41249"/>
    <lineage>
        <taxon>Eukaryota</taxon>
        <taxon>Fungi</taxon>
        <taxon>Dikarya</taxon>
        <taxon>Basidiomycota</taxon>
        <taxon>Agaricomycotina</taxon>
        <taxon>Agaricomycetes</taxon>
        <taxon>Agaricomycetidae</taxon>
        <taxon>Agaricales</taxon>
        <taxon>Marasmiineae</taxon>
        <taxon>Mycenaceae</taxon>
        <taxon>Mycena</taxon>
    </lineage>
</organism>
<name>CYB_MYCVI</name>
<gene>
    <name type="primary">COB</name>
    <name type="synonym">CYTB</name>
</gene>
<evidence type="ECO:0000250" key="1"/>
<evidence type="ECO:0000250" key="2">
    <source>
        <dbReference type="UniProtKB" id="P00157"/>
    </source>
</evidence>
<evidence type="ECO:0000250" key="3">
    <source>
        <dbReference type="UniProtKB" id="P00163"/>
    </source>
</evidence>
<evidence type="ECO:0000255" key="4">
    <source>
        <dbReference type="PROSITE-ProRule" id="PRU00967"/>
    </source>
</evidence>
<evidence type="ECO:0000255" key="5">
    <source>
        <dbReference type="PROSITE-ProRule" id="PRU00968"/>
    </source>
</evidence>
<protein>
    <recommendedName>
        <fullName>Cytochrome b</fullName>
    </recommendedName>
    <alternativeName>
        <fullName>Complex III subunit 3</fullName>
    </alternativeName>
    <alternativeName>
        <fullName>Complex III subunit III</fullName>
    </alternativeName>
    <alternativeName>
        <fullName>Cytochrome b-c1 complex subunit 3</fullName>
    </alternativeName>
    <alternativeName>
        <fullName>Ubiquinol-cytochrome-c reductase complex cytochrome b subunit</fullName>
    </alternativeName>
</protein>
<comment type="function">
    <text evidence="3">Component of the ubiquinol-cytochrome c reductase complex (complex III or cytochrome b-c1 complex) that is part of the mitochondrial respiratory chain. The b-c1 complex mediates electron transfer from ubiquinol to cytochrome c. Contributes to the generation of a proton gradient across the mitochondrial membrane that is then used for ATP synthesis.</text>
</comment>
<comment type="cofactor">
    <cofactor evidence="3">
        <name>heme b</name>
        <dbReference type="ChEBI" id="CHEBI:60344"/>
    </cofactor>
    <text evidence="3">Binds 2 heme b groups non-covalently.</text>
</comment>
<comment type="subunit">
    <text evidence="3">Fungal cytochrome b-c1 complex contains 10 subunits; 3 respiratory subunits, 2 core proteins and 5 low-molecular weight proteins. Cytochrome b-c1 complex is a homodimer.</text>
</comment>
<comment type="subcellular location">
    <subcellularLocation>
        <location evidence="3">Mitochondrion inner membrane</location>
        <topology evidence="3">Multi-pass membrane protein</topology>
    </subcellularLocation>
</comment>
<comment type="miscellaneous">
    <text evidence="1">Heme 1 (or BL or b562) is low-potential and absorbs at about 562 nm, and heme 2 (or BH or b566) is high-potential and absorbs at about 566 nm.</text>
</comment>
<comment type="similarity">
    <text evidence="4 5">Belongs to the cytochrome b family.</text>
</comment>
<comment type="caution">
    <text evidence="3">The protein contains only eight transmembrane helices, not nine as predicted by bioinformatics tools.</text>
</comment>
<sequence>MRIFKTNVLLRFVNSYIIDSPQPANLSYLWNFGSLLALCLIIQILTGCFLAMHYIPNVDLAFDSIEHIMRDVDNGYILRYTHANVASFFFIFIYVHIGRGLWYGSYRAPRVLLWSIGVIILVLMMAIGFLGYVLPFGQMSLWGATVITNLLSAIPIFGQDIVELIWGGFSVSNATLNRFFSLHYILPFVLAALAVAHMIALHTHGSSNPNGLTSNGDRYAMYPYFIFKDLVTIFAFFLVLSIIVFFYPNLMGHSDNYIPANPMVTPSSIVPEWYLLPFYAILRSIPNKLLGVLAMFGSLLILLIMPFVDFSRTRGNKTLNPINMVFFTIFVCNFITLGLVGANHATEPFIFLGQVCTTIYFAYFFVIVPVTSILQNTFLDIATIINKSA</sequence>
<geneLocation type="mitochondrion"/>
<proteinExistence type="evidence at transcript level"/>
<dbReference type="EMBL" id="X87998">
    <property type="protein sequence ID" value="CAA61248.1"/>
    <property type="molecule type" value="mRNA"/>
</dbReference>
<dbReference type="PIR" id="S62597">
    <property type="entry name" value="S62597"/>
</dbReference>
<dbReference type="SMR" id="Q36445"/>
<dbReference type="GO" id="GO:0005743">
    <property type="term" value="C:mitochondrial inner membrane"/>
    <property type="evidence" value="ECO:0007669"/>
    <property type="project" value="UniProtKB-SubCell"/>
</dbReference>
<dbReference type="GO" id="GO:0045275">
    <property type="term" value="C:respiratory chain complex III"/>
    <property type="evidence" value="ECO:0007669"/>
    <property type="project" value="InterPro"/>
</dbReference>
<dbReference type="GO" id="GO:0046872">
    <property type="term" value="F:metal ion binding"/>
    <property type="evidence" value="ECO:0007669"/>
    <property type="project" value="UniProtKB-KW"/>
</dbReference>
<dbReference type="GO" id="GO:0008121">
    <property type="term" value="F:ubiquinol-cytochrome-c reductase activity"/>
    <property type="evidence" value="ECO:0007669"/>
    <property type="project" value="InterPro"/>
</dbReference>
<dbReference type="GO" id="GO:0006122">
    <property type="term" value="P:mitochondrial electron transport, ubiquinol to cytochrome c"/>
    <property type="evidence" value="ECO:0007669"/>
    <property type="project" value="TreeGrafter"/>
</dbReference>
<dbReference type="CDD" id="cd00290">
    <property type="entry name" value="cytochrome_b_C"/>
    <property type="match status" value="1"/>
</dbReference>
<dbReference type="CDD" id="cd00284">
    <property type="entry name" value="Cytochrome_b_N"/>
    <property type="match status" value="1"/>
</dbReference>
<dbReference type="Gene3D" id="1.20.810.10">
    <property type="entry name" value="Cytochrome Bc1 Complex, Chain C"/>
    <property type="match status" value="1"/>
</dbReference>
<dbReference type="InterPro" id="IPR005798">
    <property type="entry name" value="Cyt_b/b6_C"/>
</dbReference>
<dbReference type="InterPro" id="IPR036150">
    <property type="entry name" value="Cyt_b/b6_C_sf"/>
</dbReference>
<dbReference type="InterPro" id="IPR005797">
    <property type="entry name" value="Cyt_b/b6_N"/>
</dbReference>
<dbReference type="InterPro" id="IPR027387">
    <property type="entry name" value="Cytb/b6-like_sf"/>
</dbReference>
<dbReference type="InterPro" id="IPR030689">
    <property type="entry name" value="Cytochrome_b"/>
</dbReference>
<dbReference type="InterPro" id="IPR048260">
    <property type="entry name" value="Cytochrome_b_C_euk/bac"/>
</dbReference>
<dbReference type="InterPro" id="IPR048259">
    <property type="entry name" value="Cytochrome_b_N_euk/bac"/>
</dbReference>
<dbReference type="InterPro" id="IPR016174">
    <property type="entry name" value="Di-haem_cyt_TM"/>
</dbReference>
<dbReference type="PANTHER" id="PTHR19271">
    <property type="entry name" value="CYTOCHROME B"/>
    <property type="match status" value="1"/>
</dbReference>
<dbReference type="PANTHER" id="PTHR19271:SF16">
    <property type="entry name" value="CYTOCHROME B"/>
    <property type="match status" value="1"/>
</dbReference>
<dbReference type="Pfam" id="PF00032">
    <property type="entry name" value="Cytochrom_B_C"/>
    <property type="match status" value="1"/>
</dbReference>
<dbReference type="Pfam" id="PF00033">
    <property type="entry name" value="Cytochrome_B"/>
    <property type="match status" value="1"/>
</dbReference>
<dbReference type="PIRSF" id="PIRSF038885">
    <property type="entry name" value="COB"/>
    <property type="match status" value="1"/>
</dbReference>
<dbReference type="SUPFAM" id="SSF81648">
    <property type="entry name" value="a domain/subunit of cytochrome bc1 complex (Ubiquinol-cytochrome c reductase)"/>
    <property type="match status" value="1"/>
</dbReference>
<dbReference type="SUPFAM" id="SSF81342">
    <property type="entry name" value="Transmembrane di-heme cytochromes"/>
    <property type="match status" value="1"/>
</dbReference>
<dbReference type="PROSITE" id="PS51003">
    <property type="entry name" value="CYTB_CTER"/>
    <property type="match status" value="1"/>
</dbReference>
<dbReference type="PROSITE" id="PS51002">
    <property type="entry name" value="CYTB_NTER"/>
    <property type="match status" value="1"/>
</dbReference>
<keyword id="KW-0249">Electron transport</keyword>
<keyword id="KW-0349">Heme</keyword>
<keyword id="KW-0408">Iron</keyword>
<keyword id="KW-0472">Membrane</keyword>
<keyword id="KW-0479">Metal-binding</keyword>
<keyword id="KW-0496">Mitochondrion</keyword>
<keyword id="KW-0999">Mitochondrion inner membrane</keyword>
<keyword id="KW-0679">Respiratory chain</keyword>
<keyword id="KW-0812">Transmembrane</keyword>
<keyword id="KW-1133">Transmembrane helix</keyword>
<keyword id="KW-0813">Transport</keyword>
<keyword id="KW-0830">Ubiquinone</keyword>
<accession>Q36445</accession>
<reference key="1">
    <citation type="journal article" date="1996" name="Eur. J. Biochem.">
        <title>The molecular basis for the natural resistance of the cytochrome bc1 complex from strobilurin-producing basidiomycetes to center Qp inhibitors.</title>
        <authorList>
            <person name="Kraiczy P."/>
            <person name="Haase U."/>
            <person name="Gencic S."/>
            <person name="Flindt S."/>
            <person name="Anke T."/>
            <person name="Brandt U."/>
            <person name="von Jagow G."/>
        </authorList>
    </citation>
    <scope>NUCLEOTIDE SEQUENCE [MRNA]</scope>
    <source>
        <strain>7638</strain>
    </source>
</reference>